<protein>
    <recommendedName>
        <fullName>Low molecular weight protein-tyrosine-phosphatase YfkJ</fullName>
        <shortName>LMPTP</shortName>
        <ecNumber>3.1.3.48</ecNumber>
    </recommendedName>
</protein>
<evidence type="ECO:0000269" key="1">
    <source>
    </source>
</evidence>
<evidence type="ECO:0000305" key="2"/>
<evidence type="ECO:0007829" key="3">
    <source>
        <dbReference type="PDB" id="4ETM"/>
    </source>
</evidence>
<sequence length="156" mass="17269">MISVLFVCLGNICRSPMAEAIFRDLAAKKGLEGKIKADSAGIGGWHIGNPPHEGTQEILRREGISFDGMLARQVSEQDLDDFDYIIAMDAENIGSLRSMAGFKNTSHIKRLLDYVEDSDLADVPDPYYTGNFEEVCQLIKTGCEQLLASIQKEKQL</sequence>
<keyword id="KW-0002">3D-structure</keyword>
<keyword id="KW-0378">Hydrolase</keyword>
<keyword id="KW-0904">Protein phosphatase</keyword>
<keyword id="KW-1185">Reference proteome</keyword>
<proteinExistence type="evidence at protein level"/>
<name>YFKJ_BACSU</name>
<gene>
    <name type="primary">yfkJ</name>
    <name type="ordered locus">BSU07880</name>
</gene>
<comment type="function">
    <text>Dephosphorylates the phosphotyrosine-containing proteins. Involved in ethanol stress resistance.</text>
</comment>
<comment type="catalytic activity">
    <reaction>
        <text>O-phospho-L-tyrosyl-[protein] + H2O = L-tyrosyl-[protein] + phosphate</text>
        <dbReference type="Rhea" id="RHEA:10684"/>
        <dbReference type="Rhea" id="RHEA-COMP:10136"/>
        <dbReference type="Rhea" id="RHEA-COMP:20101"/>
        <dbReference type="ChEBI" id="CHEBI:15377"/>
        <dbReference type="ChEBI" id="CHEBI:43474"/>
        <dbReference type="ChEBI" id="CHEBI:46858"/>
        <dbReference type="ChEBI" id="CHEBI:61978"/>
        <dbReference type="EC" id="3.1.3.48"/>
    </reaction>
</comment>
<comment type="activity regulation">
    <text evidence="1">Efficiently inhibited by Cu(2+) ion, Zn(2+) ion and N-ethylmaleimide, while the addition of Mg(2+), Ca(2+) or Fe(3+) ions has minimal effect. Inhibited in a competitive manner by vanadate.</text>
</comment>
<comment type="biophysicochemical properties">
    <kinetics>
        <KM evidence="1">244 uM for p-nitrophenyl-phosphate (at 37 degrees Celsius)</KM>
    </kinetics>
    <phDependence>
        <text evidence="1">Optimum pH is 6.0.</text>
    </phDependence>
</comment>
<comment type="induction">
    <text>By ethanol stress. Expression is sigma B-dependent.</text>
</comment>
<comment type="similarity">
    <text evidence="2">Belongs to the low molecular weight phosphotyrosine protein phosphatase family.</text>
</comment>
<reference key="1">
    <citation type="journal article" date="1997" name="Nature">
        <title>The complete genome sequence of the Gram-positive bacterium Bacillus subtilis.</title>
        <authorList>
            <person name="Kunst F."/>
            <person name="Ogasawara N."/>
            <person name="Moszer I."/>
            <person name="Albertini A.M."/>
            <person name="Alloni G."/>
            <person name="Azevedo V."/>
            <person name="Bertero M.G."/>
            <person name="Bessieres P."/>
            <person name="Bolotin A."/>
            <person name="Borchert S."/>
            <person name="Borriss R."/>
            <person name="Boursier L."/>
            <person name="Brans A."/>
            <person name="Braun M."/>
            <person name="Brignell S.C."/>
            <person name="Bron S."/>
            <person name="Brouillet S."/>
            <person name="Bruschi C.V."/>
            <person name="Caldwell B."/>
            <person name="Capuano V."/>
            <person name="Carter N.M."/>
            <person name="Choi S.-K."/>
            <person name="Codani J.-J."/>
            <person name="Connerton I.F."/>
            <person name="Cummings N.J."/>
            <person name="Daniel R.A."/>
            <person name="Denizot F."/>
            <person name="Devine K.M."/>
            <person name="Duesterhoeft A."/>
            <person name="Ehrlich S.D."/>
            <person name="Emmerson P.T."/>
            <person name="Entian K.-D."/>
            <person name="Errington J."/>
            <person name="Fabret C."/>
            <person name="Ferrari E."/>
            <person name="Foulger D."/>
            <person name="Fritz C."/>
            <person name="Fujita M."/>
            <person name="Fujita Y."/>
            <person name="Fuma S."/>
            <person name="Galizzi A."/>
            <person name="Galleron N."/>
            <person name="Ghim S.-Y."/>
            <person name="Glaser P."/>
            <person name="Goffeau A."/>
            <person name="Golightly E.J."/>
            <person name="Grandi G."/>
            <person name="Guiseppi G."/>
            <person name="Guy B.J."/>
            <person name="Haga K."/>
            <person name="Haiech J."/>
            <person name="Harwood C.R."/>
            <person name="Henaut A."/>
            <person name="Hilbert H."/>
            <person name="Holsappel S."/>
            <person name="Hosono S."/>
            <person name="Hullo M.-F."/>
            <person name="Itaya M."/>
            <person name="Jones L.-M."/>
            <person name="Joris B."/>
            <person name="Karamata D."/>
            <person name="Kasahara Y."/>
            <person name="Klaerr-Blanchard M."/>
            <person name="Klein C."/>
            <person name="Kobayashi Y."/>
            <person name="Koetter P."/>
            <person name="Koningstein G."/>
            <person name="Krogh S."/>
            <person name="Kumano M."/>
            <person name="Kurita K."/>
            <person name="Lapidus A."/>
            <person name="Lardinois S."/>
            <person name="Lauber J."/>
            <person name="Lazarevic V."/>
            <person name="Lee S.-M."/>
            <person name="Levine A."/>
            <person name="Liu H."/>
            <person name="Masuda S."/>
            <person name="Mauel C."/>
            <person name="Medigue C."/>
            <person name="Medina N."/>
            <person name="Mellado R.P."/>
            <person name="Mizuno M."/>
            <person name="Moestl D."/>
            <person name="Nakai S."/>
            <person name="Noback M."/>
            <person name="Noone D."/>
            <person name="O'Reilly M."/>
            <person name="Ogawa K."/>
            <person name="Ogiwara A."/>
            <person name="Oudega B."/>
            <person name="Park S.-H."/>
            <person name="Parro V."/>
            <person name="Pohl T.M."/>
            <person name="Portetelle D."/>
            <person name="Porwollik S."/>
            <person name="Prescott A.M."/>
            <person name="Presecan E."/>
            <person name="Pujic P."/>
            <person name="Purnelle B."/>
            <person name="Rapoport G."/>
            <person name="Rey M."/>
            <person name="Reynolds S."/>
            <person name="Rieger M."/>
            <person name="Rivolta C."/>
            <person name="Rocha E."/>
            <person name="Roche B."/>
            <person name="Rose M."/>
            <person name="Sadaie Y."/>
            <person name="Sato T."/>
            <person name="Scanlan E."/>
            <person name="Schleich S."/>
            <person name="Schroeter R."/>
            <person name="Scoffone F."/>
            <person name="Sekiguchi J."/>
            <person name="Sekowska A."/>
            <person name="Seror S.J."/>
            <person name="Serror P."/>
            <person name="Shin B.-S."/>
            <person name="Soldo B."/>
            <person name="Sorokin A."/>
            <person name="Tacconi E."/>
            <person name="Takagi T."/>
            <person name="Takahashi H."/>
            <person name="Takemaru K."/>
            <person name="Takeuchi M."/>
            <person name="Tamakoshi A."/>
            <person name="Tanaka T."/>
            <person name="Terpstra P."/>
            <person name="Tognoni A."/>
            <person name="Tosato V."/>
            <person name="Uchiyama S."/>
            <person name="Vandenbol M."/>
            <person name="Vannier F."/>
            <person name="Vassarotti A."/>
            <person name="Viari A."/>
            <person name="Wambutt R."/>
            <person name="Wedler E."/>
            <person name="Wedler H."/>
            <person name="Weitzenegger T."/>
            <person name="Winters P."/>
            <person name="Wipat A."/>
            <person name="Yamamoto H."/>
            <person name="Yamane K."/>
            <person name="Yasumoto K."/>
            <person name="Yata K."/>
            <person name="Yoshida K."/>
            <person name="Yoshikawa H.-F."/>
            <person name="Zumstein E."/>
            <person name="Yoshikawa H."/>
            <person name="Danchin A."/>
        </authorList>
    </citation>
    <scope>NUCLEOTIDE SEQUENCE [LARGE SCALE GENOMIC DNA]</scope>
    <source>
        <strain>168</strain>
    </source>
</reference>
<reference key="2">
    <citation type="submission" date="1996-03" db="EMBL/GenBank/DDBJ databases">
        <title>Nucleotide sequence analysis of B. subtilis cromosome in 74 degree region.</title>
        <authorList>
            <person name="Sekiguchi J."/>
            <person name="Yamamoto H."/>
            <person name="Uchiyama S."/>
            <person name="Fajar A."/>
        </authorList>
    </citation>
    <scope>NUCLEOTIDE SEQUENCE [GENOMIC DNA]</scope>
    <source>
        <strain>168 / AC327</strain>
    </source>
</reference>
<reference key="3">
    <citation type="journal article" date="2005" name="J. Bacteriol.">
        <title>Low-molecular-weight protein tyrosine phosphatases of Bacillus subtilis.</title>
        <authorList>
            <person name="Musumeci L."/>
            <person name="Bongiorni C."/>
            <person name="Tautz L."/>
            <person name="Edwards R.A."/>
            <person name="Osterman A."/>
            <person name="Perego M."/>
            <person name="Mustelin T."/>
            <person name="Bottini N."/>
        </authorList>
    </citation>
    <scope>MUTAGENESIS OF CYS-8; ARG-14 AND ASP-125</scope>
    <scope>CHARACTERIZATION</scope>
    <scope>ACTIVITY REGULATION</scope>
    <scope>BIOPHYSICOCHEMICAL PROPERTIES</scope>
    <source>
        <strain>168 / JH642</strain>
    </source>
</reference>
<feature type="chain" id="PRO_0000234659" description="Low molecular weight protein-tyrosine-phosphatase YfkJ">
    <location>
        <begin position="1"/>
        <end position="156"/>
    </location>
</feature>
<feature type="active site" description="Nucleophile" evidence="1">
    <location>
        <position position="8"/>
    </location>
</feature>
<feature type="active site" evidence="1">
    <location>
        <position position="14"/>
    </location>
</feature>
<feature type="active site" description="Proton donor" evidence="1">
    <location>
        <position position="125"/>
    </location>
</feature>
<feature type="mutagenesis site" description="Completely abolishes the tyrosine-phosphatase activity." evidence="1">
    <original>C</original>
    <variation>S</variation>
    <location>
        <position position="8"/>
    </location>
</feature>
<feature type="mutagenesis site" description="Completely abolishes the tyrosine-phosphatase activity." evidence="1">
    <original>R</original>
    <variation>K</variation>
    <location>
        <position position="14"/>
    </location>
</feature>
<feature type="mutagenesis site" description="Completely abolishes the tyrosine-phosphatase activity." evidence="1">
    <original>D</original>
    <variation>A</variation>
    <location>
        <position position="125"/>
    </location>
</feature>
<feature type="strand" evidence="3">
    <location>
        <begin position="2"/>
        <end position="13"/>
    </location>
</feature>
<feature type="helix" evidence="3">
    <location>
        <begin position="14"/>
        <end position="28"/>
    </location>
</feature>
<feature type="turn" evidence="3">
    <location>
        <begin position="32"/>
        <end position="34"/>
    </location>
</feature>
<feature type="strand" evidence="3">
    <location>
        <begin position="35"/>
        <end position="43"/>
    </location>
</feature>
<feature type="turn" evidence="3">
    <location>
        <begin position="45"/>
        <end position="48"/>
    </location>
</feature>
<feature type="helix" evidence="3">
    <location>
        <begin position="53"/>
        <end position="61"/>
    </location>
</feature>
<feature type="helix" evidence="3">
    <location>
        <begin position="76"/>
        <end position="81"/>
    </location>
</feature>
<feature type="strand" evidence="3">
    <location>
        <begin position="83"/>
        <end position="89"/>
    </location>
</feature>
<feature type="helix" evidence="3">
    <location>
        <begin position="90"/>
        <end position="100"/>
    </location>
</feature>
<feature type="strand" evidence="3">
    <location>
        <begin position="108"/>
        <end position="110"/>
    </location>
</feature>
<feature type="helix" evidence="3">
    <location>
        <begin position="111"/>
        <end position="114"/>
    </location>
</feature>
<feature type="helix" evidence="3">
    <location>
        <begin position="126"/>
        <end position="129"/>
    </location>
</feature>
<feature type="helix" evidence="3">
    <location>
        <begin position="132"/>
        <end position="153"/>
    </location>
</feature>
<organism>
    <name type="scientific">Bacillus subtilis (strain 168)</name>
    <dbReference type="NCBI Taxonomy" id="224308"/>
    <lineage>
        <taxon>Bacteria</taxon>
        <taxon>Bacillati</taxon>
        <taxon>Bacillota</taxon>
        <taxon>Bacilli</taxon>
        <taxon>Bacillales</taxon>
        <taxon>Bacillaceae</taxon>
        <taxon>Bacillus</taxon>
    </lineage>
</organism>
<accession>O35016</accession>
<accession>Q79EX9</accession>
<dbReference type="EC" id="3.1.3.48"/>
<dbReference type="EMBL" id="AL009126">
    <property type="protein sequence ID" value="CAB12617.1"/>
    <property type="molecule type" value="Genomic_DNA"/>
</dbReference>
<dbReference type="EMBL" id="D83967">
    <property type="protein sequence ID" value="BAA23400.1"/>
    <property type="molecule type" value="Genomic_DNA"/>
</dbReference>
<dbReference type="PIR" id="E69808">
    <property type="entry name" value="E69808"/>
</dbReference>
<dbReference type="RefSeq" id="NP_388669.1">
    <property type="nucleotide sequence ID" value="NC_000964.3"/>
</dbReference>
<dbReference type="RefSeq" id="WP_003243480.1">
    <property type="nucleotide sequence ID" value="NZ_OZ025638.1"/>
</dbReference>
<dbReference type="PDB" id="4ETM">
    <property type="method" value="X-ray"/>
    <property type="resolution" value="1.60 A"/>
    <property type="chains" value="A/B=1-156"/>
</dbReference>
<dbReference type="PDBsum" id="4ETM"/>
<dbReference type="SMR" id="O35016"/>
<dbReference type="FunCoup" id="O35016">
    <property type="interactions" value="658"/>
</dbReference>
<dbReference type="STRING" id="224308.BSU07880"/>
<dbReference type="PaxDb" id="224308-BSU07880"/>
<dbReference type="EnsemblBacteria" id="CAB12617">
    <property type="protein sequence ID" value="CAB12617"/>
    <property type="gene ID" value="BSU_07880"/>
</dbReference>
<dbReference type="GeneID" id="939191"/>
<dbReference type="KEGG" id="bsu:BSU07880"/>
<dbReference type="PATRIC" id="fig|224308.179.peg.852"/>
<dbReference type="eggNOG" id="COG0394">
    <property type="taxonomic scope" value="Bacteria"/>
</dbReference>
<dbReference type="InParanoid" id="O35016"/>
<dbReference type="OrthoDB" id="9784339at2"/>
<dbReference type="PhylomeDB" id="O35016"/>
<dbReference type="BioCyc" id="BSUB:BSU07880-MONOMER"/>
<dbReference type="SABIO-RK" id="O35016"/>
<dbReference type="EvolutionaryTrace" id="O35016"/>
<dbReference type="Proteomes" id="UP000001570">
    <property type="component" value="Chromosome"/>
</dbReference>
<dbReference type="GO" id="GO:0004725">
    <property type="term" value="F:protein tyrosine phosphatase activity"/>
    <property type="evidence" value="ECO:0000318"/>
    <property type="project" value="GO_Central"/>
</dbReference>
<dbReference type="CDD" id="cd16343">
    <property type="entry name" value="LMWPTP"/>
    <property type="match status" value="1"/>
</dbReference>
<dbReference type="FunFam" id="3.40.50.2300:FF:000113">
    <property type="entry name" value="Low molecular weight protein-tyrosine-phosphatase"/>
    <property type="match status" value="1"/>
</dbReference>
<dbReference type="Gene3D" id="3.40.50.2300">
    <property type="match status" value="1"/>
</dbReference>
<dbReference type="InterPro" id="IPR050438">
    <property type="entry name" value="LMW_PTPase"/>
</dbReference>
<dbReference type="InterPro" id="IPR023485">
    <property type="entry name" value="Ptyr_pPase"/>
</dbReference>
<dbReference type="InterPro" id="IPR036196">
    <property type="entry name" value="Ptyr_pPase_sf"/>
</dbReference>
<dbReference type="InterPro" id="IPR017867">
    <property type="entry name" value="Tyr_phospatase_low_mol_wt"/>
</dbReference>
<dbReference type="PANTHER" id="PTHR11717:SF7">
    <property type="entry name" value="LOW MOLECULAR WEIGHT PHOSPHOTYROSINE PROTEIN PHOSPHATASE"/>
    <property type="match status" value="1"/>
</dbReference>
<dbReference type="PANTHER" id="PTHR11717">
    <property type="entry name" value="LOW MOLECULAR WEIGHT PROTEIN TYROSINE PHOSPHATASE"/>
    <property type="match status" value="1"/>
</dbReference>
<dbReference type="Pfam" id="PF01451">
    <property type="entry name" value="LMWPc"/>
    <property type="match status" value="1"/>
</dbReference>
<dbReference type="PRINTS" id="PR00719">
    <property type="entry name" value="LMWPTPASE"/>
</dbReference>
<dbReference type="SMART" id="SM00226">
    <property type="entry name" value="LMWPc"/>
    <property type="match status" value="1"/>
</dbReference>
<dbReference type="SUPFAM" id="SSF52788">
    <property type="entry name" value="Phosphotyrosine protein phosphatases I"/>
    <property type="match status" value="1"/>
</dbReference>